<reference key="1">
    <citation type="journal article" date="2002" name="Nat. Biotechnol.">
        <title>Genome sequence of the dissimilatory metal ion-reducing bacterium Shewanella oneidensis.</title>
        <authorList>
            <person name="Heidelberg J.F."/>
            <person name="Paulsen I.T."/>
            <person name="Nelson K.E."/>
            <person name="Gaidos E.J."/>
            <person name="Nelson W.C."/>
            <person name="Read T.D."/>
            <person name="Eisen J.A."/>
            <person name="Seshadri R."/>
            <person name="Ward N.L."/>
            <person name="Methe B.A."/>
            <person name="Clayton R.A."/>
            <person name="Meyer T."/>
            <person name="Tsapin A."/>
            <person name="Scott J."/>
            <person name="Beanan M.J."/>
            <person name="Brinkac L.M."/>
            <person name="Daugherty S.C."/>
            <person name="DeBoy R.T."/>
            <person name="Dodson R.J."/>
            <person name="Durkin A.S."/>
            <person name="Haft D.H."/>
            <person name="Kolonay J.F."/>
            <person name="Madupu R."/>
            <person name="Peterson J.D."/>
            <person name="Umayam L.A."/>
            <person name="White O."/>
            <person name="Wolf A.M."/>
            <person name="Vamathevan J.J."/>
            <person name="Weidman J.F."/>
            <person name="Impraim M."/>
            <person name="Lee K."/>
            <person name="Berry K.J."/>
            <person name="Lee C."/>
            <person name="Mueller J."/>
            <person name="Khouri H.M."/>
            <person name="Gill J."/>
            <person name="Utterback T.R."/>
            <person name="McDonald L.A."/>
            <person name="Feldblyum T.V."/>
            <person name="Smith H.O."/>
            <person name="Venter J.C."/>
            <person name="Nealson K.H."/>
            <person name="Fraser C.M."/>
        </authorList>
    </citation>
    <scope>NUCLEOTIDE SEQUENCE [LARGE SCALE GENOMIC DNA]</scope>
    <source>
        <strain>ATCC 700550 / JCM 31522 / CIP 106686 / LMG 19005 / NCIMB 14063 / MR-1</strain>
    </source>
</reference>
<name>LIPB_SHEON</name>
<gene>
    <name evidence="1" type="primary">lipB</name>
    <name type="ordered locus">SO_1162</name>
</gene>
<protein>
    <recommendedName>
        <fullName evidence="1">Octanoyltransferase</fullName>
        <ecNumber evidence="1">2.3.1.181</ecNumber>
    </recommendedName>
    <alternativeName>
        <fullName evidence="1">Lipoate-protein ligase B</fullName>
    </alternativeName>
    <alternativeName>
        <fullName evidence="1">Lipoyl/octanoyl transferase</fullName>
    </alternativeName>
    <alternativeName>
        <fullName evidence="1">Octanoyl-[acyl-carrier-protein]-protein N-octanoyltransferase</fullName>
    </alternativeName>
</protein>
<evidence type="ECO:0000255" key="1">
    <source>
        <dbReference type="HAMAP-Rule" id="MF_00013"/>
    </source>
</evidence>
<evidence type="ECO:0000255" key="2">
    <source>
        <dbReference type="PROSITE-ProRule" id="PRU01067"/>
    </source>
</evidence>
<dbReference type="EC" id="2.3.1.181" evidence="1"/>
<dbReference type="EMBL" id="AE014299">
    <property type="protein sequence ID" value="AAN54232.2"/>
    <property type="molecule type" value="Genomic_DNA"/>
</dbReference>
<dbReference type="RefSeq" id="NP_716787.2">
    <property type="nucleotide sequence ID" value="NC_004347.2"/>
</dbReference>
<dbReference type="RefSeq" id="WP_011071393.1">
    <property type="nucleotide sequence ID" value="NC_004347.2"/>
</dbReference>
<dbReference type="SMR" id="Q8EHQ5"/>
<dbReference type="STRING" id="211586.SO_1162"/>
<dbReference type="PaxDb" id="211586-SO_1162"/>
<dbReference type="KEGG" id="son:SO_1162"/>
<dbReference type="PATRIC" id="fig|211586.12.peg.1114"/>
<dbReference type="eggNOG" id="COG0321">
    <property type="taxonomic scope" value="Bacteria"/>
</dbReference>
<dbReference type="HOGENOM" id="CLU_035168_3_1_6"/>
<dbReference type="OrthoDB" id="9787061at2"/>
<dbReference type="PhylomeDB" id="Q8EHQ5"/>
<dbReference type="BioCyc" id="SONE211586:G1GMP-1066-MONOMER"/>
<dbReference type="UniPathway" id="UPA00538">
    <property type="reaction ID" value="UER00592"/>
</dbReference>
<dbReference type="Proteomes" id="UP000008186">
    <property type="component" value="Chromosome"/>
</dbReference>
<dbReference type="GO" id="GO:0005737">
    <property type="term" value="C:cytoplasm"/>
    <property type="evidence" value="ECO:0007669"/>
    <property type="project" value="UniProtKB-SubCell"/>
</dbReference>
<dbReference type="GO" id="GO:0033819">
    <property type="term" value="F:lipoyl(octanoyl) transferase activity"/>
    <property type="evidence" value="ECO:0000318"/>
    <property type="project" value="GO_Central"/>
</dbReference>
<dbReference type="GO" id="GO:0036211">
    <property type="term" value="P:protein modification process"/>
    <property type="evidence" value="ECO:0007669"/>
    <property type="project" value="InterPro"/>
</dbReference>
<dbReference type="CDD" id="cd16444">
    <property type="entry name" value="LipB"/>
    <property type="match status" value="1"/>
</dbReference>
<dbReference type="FunFam" id="3.30.930.10:FF:000020">
    <property type="entry name" value="Octanoyltransferase"/>
    <property type="match status" value="1"/>
</dbReference>
<dbReference type="Gene3D" id="3.30.930.10">
    <property type="entry name" value="Bira Bifunctional Protein, Domain 2"/>
    <property type="match status" value="1"/>
</dbReference>
<dbReference type="HAMAP" id="MF_00013">
    <property type="entry name" value="LipB"/>
    <property type="match status" value="1"/>
</dbReference>
<dbReference type="InterPro" id="IPR045864">
    <property type="entry name" value="aa-tRNA-synth_II/BPL/LPL"/>
</dbReference>
<dbReference type="InterPro" id="IPR004143">
    <property type="entry name" value="BPL_LPL_catalytic"/>
</dbReference>
<dbReference type="InterPro" id="IPR000544">
    <property type="entry name" value="Octanoyltransferase"/>
</dbReference>
<dbReference type="InterPro" id="IPR020605">
    <property type="entry name" value="Octanoyltransferase_CS"/>
</dbReference>
<dbReference type="NCBIfam" id="TIGR00214">
    <property type="entry name" value="lipB"/>
    <property type="match status" value="1"/>
</dbReference>
<dbReference type="NCBIfam" id="NF010922">
    <property type="entry name" value="PRK14342.1"/>
    <property type="match status" value="1"/>
</dbReference>
<dbReference type="PANTHER" id="PTHR10993:SF7">
    <property type="entry name" value="LIPOYLTRANSFERASE 2, MITOCHONDRIAL-RELATED"/>
    <property type="match status" value="1"/>
</dbReference>
<dbReference type="PANTHER" id="PTHR10993">
    <property type="entry name" value="OCTANOYLTRANSFERASE"/>
    <property type="match status" value="1"/>
</dbReference>
<dbReference type="Pfam" id="PF21948">
    <property type="entry name" value="LplA-B_cat"/>
    <property type="match status" value="1"/>
</dbReference>
<dbReference type="PIRSF" id="PIRSF016262">
    <property type="entry name" value="LPLase"/>
    <property type="match status" value="1"/>
</dbReference>
<dbReference type="SUPFAM" id="SSF55681">
    <property type="entry name" value="Class II aaRS and biotin synthetases"/>
    <property type="match status" value="1"/>
</dbReference>
<dbReference type="PROSITE" id="PS51733">
    <property type="entry name" value="BPL_LPL_CATALYTIC"/>
    <property type="match status" value="1"/>
</dbReference>
<dbReference type="PROSITE" id="PS01313">
    <property type="entry name" value="LIPB"/>
    <property type="match status" value="1"/>
</dbReference>
<feature type="chain" id="PRO_0000062878" description="Octanoyltransferase">
    <location>
        <begin position="1"/>
        <end position="217"/>
    </location>
</feature>
<feature type="domain" description="BPL/LPL catalytic" evidence="2">
    <location>
        <begin position="32"/>
        <end position="207"/>
    </location>
</feature>
<feature type="active site" description="Acyl-thioester intermediate" evidence="1">
    <location>
        <position position="169"/>
    </location>
</feature>
<feature type="binding site" evidence="1">
    <location>
        <begin position="71"/>
        <end position="78"/>
    </location>
    <ligand>
        <name>substrate</name>
    </ligand>
</feature>
<feature type="binding site" evidence="1">
    <location>
        <begin position="138"/>
        <end position="140"/>
    </location>
    <ligand>
        <name>substrate</name>
    </ligand>
</feature>
<feature type="binding site" evidence="1">
    <location>
        <begin position="151"/>
        <end position="153"/>
    </location>
    <ligand>
        <name>substrate</name>
    </ligand>
</feature>
<feature type="site" description="Lowers pKa of active site Cys" evidence="1">
    <location>
        <position position="135"/>
    </location>
</feature>
<comment type="function">
    <text evidence="1">Catalyzes the transfer of endogenously produced octanoic acid from octanoyl-acyl-carrier-protein onto the lipoyl domains of lipoate-dependent enzymes. Lipoyl-ACP can also act as a substrate although octanoyl-ACP is likely to be the physiological substrate.</text>
</comment>
<comment type="catalytic activity">
    <reaction evidence="1">
        <text>octanoyl-[ACP] + L-lysyl-[protein] = N(6)-octanoyl-L-lysyl-[protein] + holo-[ACP] + H(+)</text>
        <dbReference type="Rhea" id="RHEA:17665"/>
        <dbReference type="Rhea" id="RHEA-COMP:9636"/>
        <dbReference type="Rhea" id="RHEA-COMP:9685"/>
        <dbReference type="Rhea" id="RHEA-COMP:9752"/>
        <dbReference type="Rhea" id="RHEA-COMP:9928"/>
        <dbReference type="ChEBI" id="CHEBI:15378"/>
        <dbReference type="ChEBI" id="CHEBI:29969"/>
        <dbReference type="ChEBI" id="CHEBI:64479"/>
        <dbReference type="ChEBI" id="CHEBI:78463"/>
        <dbReference type="ChEBI" id="CHEBI:78809"/>
        <dbReference type="EC" id="2.3.1.181"/>
    </reaction>
</comment>
<comment type="pathway">
    <text evidence="1">Protein modification; protein lipoylation via endogenous pathway; protein N(6)-(lipoyl)lysine from octanoyl-[acyl-carrier-protein]: step 1/2.</text>
</comment>
<comment type="subcellular location">
    <subcellularLocation>
        <location evidence="1">Cytoplasm</location>
    </subcellularLocation>
</comment>
<comment type="miscellaneous">
    <text evidence="1">In the reaction, the free carboxyl group of octanoic acid is attached via an amide linkage to the epsilon-amino group of a specific lysine residue of lipoyl domains of lipoate-dependent enzymes.</text>
</comment>
<comment type="similarity">
    <text evidence="1">Belongs to the LipB family.</text>
</comment>
<sequence>MQNTTLHIRHLGQQDYESVWHAMQHYTDTRNNDSPDELWIVEHPPVFTQGQAGKSEHILNPGDIPVIQVDRGGQVTYHGPGQLVVYPLLDIKRSKIGVRQLVTYIEQSIIDMLAKYTINAYAKADAPGVYVDERKVASLGLRIRKGCSFHGLALNVDMDLAPFRRINPCGYAGLEMVQCRELGGPQTVIEAGDQLIITLSQLLGYQHLVHHQGLAAS</sequence>
<organism>
    <name type="scientific">Shewanella oneidensis (strain ATCC 700550 / JCM 31522 / CIP 106686 / LMG 19005 / NCIMB 14063 / MR-1)</name>
    <dbReference type="NCBI Taxonomy" id="211586"/>
    <lineage>
        <taxon>Bacteria</taxon>
        <taxon>Pseudomonadati</taxon>
        <taxon>Pseudomonadota</taxon>
        <taxon>Gammaproteobacteria</taxon>
        <taxon>Alteromonadales</taxon>
        <taxon>Shewanellaceae</taxon>
        <taxon>Shewanella</taxon>
    </lineage>
</organism>
<proteinExistence type="inferred from homology"/>
<accession>Q8EHQ5</accession>
<keyword id="KW-0012">Acyltransferase</keyword>
<keyword id="KW-0963">Cytoplasm</keyword>
<keyword id="KW-1185">Reference proteome</keyword>
<keyword id="KW-0808">Transferase</keyword>